<dbReference type="EC" id="1.15.1.1"/>
<dbReference type="EMBL" id="D49486">
    <property type="protein sequence ID" value="BAA19675.1"/>
    <property type="molecule type" value="mRNA"/>
</dbReference>
<dbReference type="SMR" id="O04997"/>
<dbReference type="GO" id="GO:0009507">
    <property type="term" value="C:chloroplast"/>
    <property type="evidence" value="ECO:0007669"/>
    <property type="project" value="UniProtKB-SubCell"/>
</dbReference>
<dbReference type="GO" id="GO:0005507">
    <property type="term" value="F:copper ion binding"/>
    <property type="evidence" value="ECO:0007669"/>
    <property type="project" value="InterPro"/>
</dbReference>
<dbReference type="GO" id="GO:0004784">
    <property type="term" value="F:superoxide dismutase activity"/>
    <property type="evidence" value="ECO:0007669"/>
    <property type="project" value="UniProtKB-EC"/>
</dbReference>
<dbReference type="CDD" id="cd00305">
    <property type="entry name" value="Cu-Zn_Superoxide_Dismutase"/>
    <property type="match status" value="1"/>
</dbReference>
<dbReference type="FunFam" id="2.60.40.200:FF:000003">
    <property type="entry name" value="Superoxide dismutase [Cu-Zn], chloroplastic"/>
    <property type="match status" value="1"/>
</dbReference>
<dbReference type="Gene3D" id="2.60.40.200">
    <property type="entry name" value="Superoxide dismutase, copper/zinc binding domain"/>
    <property type="match status" value="1"/>
</dbReference>
<dbReference type="InterPro" id="IPR036423">
    <property type="entry name" value="SOD-like_Cu/Zn_dom_sf"/>
</dbReference>
<dbReference type="InterPro" id="IPR024134">
    <property type="entry name" value="SOD_Cu/Zn_/chaperone"/>
</dbReference>
<dbReference type="InterPro" id="IPR018152">
    <property type="entry name" value="SOD_Cu/Zn_BS"/>
</dbReference>
<dbReference type="InterPro" id="IPR001424">
    <property type="entry name" value="SOD_Cu_Zn_dom"/>
</dbReference>
<dbReference type="PANTHER" id="PTHR10003">
    <property type="entry name" value="SUPEROXIDE DISMUTASE CU-ZN -RELATED"/>
    <property type="match status" value="1"/>
</dbReference>
<dbReference type="Pfam" id="PF00080">
    <property type="entry name" value="Sod_Cu"/>
    <property type="match status" value="1"/>
</dbReference>
<dbReference type="PRINTS" id="PR00068">
    <property type="entry name" value="CUZNDISMTASE"/>
</dbReference>
<dbReference type="SUPFAM" id="SSF49329">
    <property type="entry name" value="Cu,Zn superoxide dismutase-like"/>
    <property type="match status" value="1"/>
</dbReference>
<dbReference type="PROSITE" id="PS00087">
    <property type="entry name" value="SOD_CU_ZN_1"/>
    <property type="match status" value="1"/>
</dbReference>
<dbReference type="PROSITE" id="PS00332">
    <property type="entry name" value="SOD_CU_ZN_2"/>
    <property type="match status" value="1"/>
</dbReference>
<proteinExistence type="evidence at transcript level"/>
<feature type="transit peptide" description="Chloroplast" evidence="2">
    <location>
        <begin position="1"/>
        <end position="66"/>
    </location>
</feature>
<feature type="chain" id="PRO_0000032851" description="Superoxide dismutase [Cu-Zn], chloroplastic">
    <location>
        <begin position="67"/>
        <end position="220"/>
    </location>
</feature>
<feature type="binding site" evidence="1">
    <location>
        <position position="112"/>
    </location>
    <ligand>
        <name>Cu cation</name>
        <dbReference type="ChEBI" id="CHEBI:23378"/>
        <note>catalytic</note>
    </ligand>
</feature>
<feature type="binding site" evidence="1">
    <location>
        <position position="114"/>
    </location>
    <ligand>
        <name>Cu cation</name>
        <dbReference type="ChEBI" id="CHEBI:23378"/>
        <note>catalytic</note>
    </ligand>
</feature>
<feature type="binding site" evidence="1">
    <location>
        <position position="129"/>
    </location>
    <ligand>
        <name>Cu cation</name>
        <dbReference type="ChEBI" id="CHEBI:23378"/>
        <note>catalytic</note>
    </ligand>
</feature>
<feature type="binding site" evidence="1">
    <location>
        <position position="129"/>
    </location>
    <ligand>
        <name>Zn(2+)</name>
        <dbReference type="ChEBI" id="CHEBI:29105"/>
        <note>structural</note>
    </ligand>
</feature>
<feature type="binding site" evidence="1">
    <location>
        <position position="137"/>
    </location>
    <ligand>
        <name>Zn(2+)</name>
        <dbReference type="ChEBI" id="CHEBI:29105"/>
        <note>structural</note>
    </ligand>
</feature>
<feature type="binding site" evidence="1">
    <location>
        <position position="146"/>
    </location>
    <ligand>
        <name>Zn(2+)</name>
        <dbReference type="ChEBI" id="CHEBI:29105"/>
        <note>structural</note>
    </ligand>
</feature>
<feature type="binding site" evidence="1">
    <location>
        <position position="149"/>
    </location>
    <ligand>
        <name>Zn(2+)</name>
        <dbReference type="ChEBI" id="CHEBI:29105"/>
        <note>structural</note>
    </ligand>
</feature>
<feature type="binding site" evidence="1">
    <location>
        <position position="186"/>
    </location>
    <ligand>
        <name>Cu cation</name>
        <dbReference type="ChEBI" id="CHEBI:23378"/>
        <note>catalytic</note>
    </ligand>
</feature>
<feature type="disulfide bond" evidence="1">
    <location>
        <begin position="123"/>
        <end position="212"/>
    </location>
</feature>
<gene>
    <name type="primary">SODCP</name>
</gene>
<protein>
    <recommendedName>
        <fullName>Superoxide dismutase [Cu-Zn], chloroplastic</fullName>
        <ecNumber>1.15.1.1</ecNumber>
    </recommendedName>
</protein>
<keyword id="KW-0049">Antioxidant</keyword>
<keyword id="KW-0150">Chloroplast</keyword>
<keyword id="KW-0186">Copper</keyword>
<keyword id="KW-1015">Disulfide bond</keyword>
<keyword id="KW-0479">Metal-binding</keyword>
<keyword id="KW-0560">Oxidoreductase</keyword>
<keyword id="KW-0934">Plastid</keyword>
<keyword id="KW-0809">Transit peptide</keyword>
<keyword id="KW-0862">Zinc</keyword>
<evidence type="ECO:0000250" key="1"/>
<evidence type="ECO:0000255" key="2"/>
<evidence type="ECO:0000305" key="3"/>
<accession>O04997</accession>
<organism>
    <name type="scientific">Solidago canadensis var. scabra</name>
    <name type="common">Tall goldenrod</name>
    <name type="synonym">Solidago altissima</name>
    <dbReference type="NCBI Taxonomy" id="59294"/>
    <lineage>
        <taxon>Eukaryota</taxon>
        <taxon>Viridiplantae</taxon>
        <taxon>Streptophyta</taxon>
        <taxon>Embryophyta</taxon>
        <taxon>Tracheophyta</taxon>
        <taxon>Spermatophyta</taxon>
        <taxon>Magnoliopsida</taxon>
        <taxon>eudicotyledons</taxon>
        <taxon>Gunneridae</taxon>
        <taxon>Pentapetalae</taxon>
        <taxon>asterids</taxon>
        <taxon>campanulids</taxon>
        <taxon>Asterales</taxon>
        <taxon>Asteraceae</taxon>
        <taxon>Asteroideae</taxon>
        <taxon>Astereae</taxon>
        <taxon>North American clade</taxon>
        <taxon>Solidagininae</taxon>
        <taxon>Solidago</taxon>
    </lineage>
</organism>
<name>SODCP_SOLCS</name>
<comment type="function">
    <text>Destroys radicals which are normally produced within the cells and which are toxic to biological systems.</text>
</comment>
<comment type="catalytic activity">
    <reaction>
        <text>2 superoxide + 2 H(+) = H2O2 + O2</text>
        <dbReference type="Rhea" id="RHEA:20696"/>
        <dbReference type="ChEBI" id="CHEBI:15378"/>
        <dbReference type="ChEBI" id="CHEBI:15379"/>
        <dbReference type="ChEBI" id="CHEBI:16240"/>
        <dbReference type="ChEBI" id="CHEBI:18421"/>
        <dbReference type="EC" id="1.15.1.1"/>
    </reaction>
</comment>
<comment type="cofactor">
    <cofactor evidence="1">
        <name>Cu cation</name>
        <dbReference type="ChEBI" id="CHEBI:23378"/>
    </cofactor>
    <text evidence="1">Binds 1 copper ion per subunit.</text>
</comment>
<comment type="cofactor">
    <cofactor evidence="1">
        <name>Zn(2+)</name>
        <dbReference type="ChEBI" id="CHEBI:29105"/>
    </cofactor>
    <text evidence="1">Binds 1 zinc ion per subunit.</text>
</comment>
<comment type="subunit">
    <text evidence="1">Homotetramer.</text>
</comment>
<comment type="subcellular location">
    <subcellularLocation>
        <location>Plastid</location>
        <location>Chloroplast</location>
    </subcellularLocation>
</comment>
<comment type="similarity">
    <text evidence="3">Belongs to the Cu-Zn superoxide dismutase family.</text>
</comment>
<sequence length="220" mass="22211">MAAHCILFSSPAATTSLIFPISNPNTAVSLPSSSFHGVSLKSTINRQSLTLSAAASAAPKPLTVFAATKKAVAVLKGTSSVEGVVTLTQEEDGPTTVNVKITGLTPGPHGFHLHEFGDTTNGCISTGPHFNPNGNTHGAPEDENRHAGDLGNIIANADGVAEATIVDNQIPLTGPNAVVGRAFVVHELADDLGKGGHELSLSTGNAGGRLACGVVGLTPV</sequence>
<reference key="1">
    <citation type="journal article" date="1996" name="Plant Sci.">
        <title>Different transcriptional regulation of cytosolic and plastidic Cu/Zn-superoxide dismutase genes in Solidago altissima (Asteraceae).</title>
        <authorList>
            <person name="Murai R."/>
            <person name="Murai K."/>
        </authorList>
    </citation>
    <scope>NUCLEOTIDE SEQUENCE [MRNA]</scope>
    <source>
        <strain>cv. Nonoichi-Machi</strain>
    </source>
</reference>